<name>SYI2_BACCZ</name>
<dbReference type="EC" id="6.1.1.5" evidence="1"/>
<dbReference type="EMBL" id="CP000001">
    <property type="protein sequence ID" value="AAU18279.1"/>
    <property type="molecule type" value="Genomic_DNA"/>
</dbReference>
<dbReference type="RefSeq" id="WP_000754914.1">
    <property type="nucleotide sequence ID" value="NC_006274.1"/>
</dbReference>
<dbReference type="SMR" id="Q63BZ8"/>
<dbReference type="KEGG" id="bcz:BCE33L1977"/>
<dbReference type="PATRIC" id="fig|288681.22.peg.3547"/>
<dbReference type="Proteomes" id="UP000002612">
    <property type="component" value="Chromosome"/>
</dbReference>
<dbReference type="GO" id="GO:0005737">
    <property type="term" value="C:cytoplasm"/>
    <property type="evidence" value="ECO:0007669"/>
    <property type="project" value="UniProtKB-SubCell"/>
</dbReference>
<dbReference type="GO" id="GO:0002161">
    <property type="term" value="F:aminoacyl-tRNA deacylase activity"/>
    <property type="evidence" value="ECO:0007669"/>
    <property type="project" value="InterPro"/>
</dbReference>
<dbReference type="GO" id="GO:0005524">
    <property type="term" value="F:ATP binding"/>
    <property type="evidence" value="ECO:0007669"/>
    <property type="project" value="UniProtKB-UniRule"/>
</dbReference>
<dbReference type="GO" id="GO:0004822">
    <property type="term" value="F:isoleucine-tRNA ligase activity"/>
    <property type="evidence" value="ECO:0007669"/>
    <property type="project" value="UniProtKB-UniRule"/>
</dbReference>
<dbReference type="GO" id="GO:0000049">
    <property type="term" value="F:tRNA binding"/>
    <property type="evidence" value="ECO:0007669"/>
    <property type="project" value="InterPro"/>
</dbReference>
<dbReference type="GO" id="GO:0008270">
    <property type="term" value="F:zinc ion binding"/>
    <property type="evidence" value="ECO:0007669"/>
    <property type="project" value="UniProtKB-UniRule"/>
</dbReference>
<dbReference type="GO" id="GO:0006428">
    <property type="term" value="P:isoleucyl-tRNA aminoacylation"/>
    <property type="evidence" value="ECO:0007669"/>
    <property type="project" value="UniProtKB-UniRule"/>
</dbReference>
<dbReference type="CDD" id="cd07961">
    <property type="entry name" value="Anticodon_Ia_Ile_ABEc"/>
    <property type="match status" value="1"/>
</dbReference>
<dbReference type="CDD" id="cd00818">
    <property type="entry name" value="IleRS_core"/>
    <property type="match status" value="1"/>
</dbReference>
<dbReference type="FunFam" id="1.10.730.10:FF:000038">
    <property type="entry name" value="Isoleucine--tRNA ligase"/>
    <property type="match status" value="1"/>
</dbReference>
<dbReference type="FunFam" id="3.40.50.620:FF:000063">
    <property type="entry name" value="Isoleucine--tRNA ligase"/>
    <property type="match status" value="1"/>
</dbReference>
<dbReference type="FunFam" id="3.40.50.620:FF:000075">
    <property type="entry name" value="Isoleucine--tRNA ligase"/>
    <property type="match status" value="1"/>
</dbReference>
<dbReference type="Gene3D" id="3.40.50.620">
    <property type="entry name" value="HUPs"/>
    <property type="match status" value="2"/>
</dbReference>
<dbReference type="Gene3D" id="1.10.730.10">
    <property type="entry name" value="Isoleucyl-tRNA Synthetase, Domain 1"/>
    <property type="match status" value="1"/>
</dbReference>
<dbReference type="HAMAP" id="MF_02003">
    <property type="entry name" value="Ile_tRNA_synth_type2"/>
    <property type="match status" value="1"/>
</dbReference>
<dbReference type="InterPro" id="IPR001412">
    <property type="entry name" value="aa-tRNA-synth_I_CS"/>
</dbReference>
<dbReference type="InterPro" id="IPR002300">
    <property type="entry name" value="aa-tRNA-synth_Ia"/>
</dbReference>
<dbReference type="InterPro" id="IPR033709">
    <property type="entry name" value="Anticodon_Ile_ABEc"/>
</dbReference>
<dbReference type="InterPro" id="IPR002301">
    <property type="entry name" value="Ile-tRNA-ligase"/>
</dbReference>
<dbReference type="InterPro" id="IPR023586">
    <property type="entry name" value="Ile-tRNA-ligase_type2"/>
</dbReference>
<dbReference type="InterPro" id="IPR013155">
    <property type="entry name" value="M/V/L/I-tRNA-synth_anticd-bd"/>
</dbReference>
<dbReference type="InterPro" id="IPR014729">
    <property type="entry name" value="Rossmann-like_a/b/a_fold"/>
</dbReference>
<dbReference type="InterPro" id="IPR009080">
    <property type="entry name" value="tRNAsynth_Ia_anticodon-bd"/>
</dbReference>
<dbReference type="InterPro" id="IPR009008">
    <property type="entry name" value="Val/Leu/Ile-tRNA-synth_edit"/>
</dbReference>
<dbReference type="NCBIfam" id="TIGR00392">
    <property type="entry name" value="ileS"/>
    <property type="match status" value="1"/>
</dbReference>
<dbReference type="PANTHER" id="PTHR42780:SF1">
    <property type="entry name" value="ISOLEUCINE--TRNA LIGASE, CYTOPLASMIC"/>
    <property type="match status" value="1"/>
</dbReference>
<dbReference type="PANTHER" id="PTHR42780">
    <property type="entry name" value="SOLEUCYL-TRNA SYNTHETASE"/>
    <property type="match status" value="1"/>
</dbReference>
<dbReference type="Pfam" id="PF08264">
    <property type="entry name" value="Anticodon_1"/>
    <property type="match status" value="1"/>
</dbReference>
<dbReference type="Pfam" id="PF19302">
    <property type="entry name" value="DUF5915"/>
    <property type="match status" value="1"/>
</dbReference>
<dbReference type="Pfam" id="PF00133">
    <property type="entry name" value="tRNA-synt_1"/>
    <property type="match status" value="1"/>
</dbReference>
<dbReference type="PRINTS" id="PR00984">
    <property type="entry name" value="TRNASYNTHILE"/>
</dbReference>
<dbReference type="SUPFAM" id="SSF47323">
    <property type="entry name" value="Anticodon-binding domain of a subclass of class I aminoacyl-tRNA synthetases"/>
    <property type="match status" value="2"/>
</dbReference>
<dbReference type="SUPFAM" id="SSF52374">
    <property type="entry name" value="Nucleotidylyl transferase"/>
    <property type="match status" value="1"/>
</dbReference>
<dbReference type="SUPFAM" id="SSF50677">
    <property type="entry name" value="ValRS/IleRS/LeuRS editing domain"/>
    <property type="match status" value="1"/>
</dbReference>
<dbReference type="PROSITE" id="PS00178">
    <property type="entry name" value="AA_TRNA_LIGASE_I"/>
    <property type="match status" value="1"/>
</dbReference>
<gene>
    <name evidence="1" type="primary">ileS2</name>
    <name type="ordered locus">BCE33L1977</name>
</gene>
<evidence type="ECO:0000255" key="1">
    <source>
        <dbReference type="HAMAP-Rule" id="MF_02003"/>
    </source>
</evidence>
<sequence>MKKVDVKESAVGRETRIRKQWNEQSIFEQSIQNREGAQSFVFYEGPPTANGLPHVGHALGRTIKDVVARYKTMAGYKVLRKAGWDTHGLPVELGVEKQLGISGKHEIEEYGIEPFIKKCKESVFTYEKQWREFTESIGYWVDMDDPYVTLENPYIESVWHILGTIHEKGLLYKGHRVSPYCPSCQTSLSSHEVAQGYKTVKDLSATVKFKVKDSENEYFLGWTTTPWTLPANVALAVHPNMEYVKAKQEGHVYIVAKERVQDVLKENYEVLSVHKGEELLNISYTAPFPMKEVTNGYRVIGADFVTADSGTGLVHIAPAYGEDDYRVVQSEGLSFLHVVDEKGEYTEAVPFLKGKFVKDCDVDIVRYLAKEGLLYHKEKYEHSYPHCWRCDSPLLYYAGESWLIRTTAIKDTFLQNNDSVTWYPDHMKHGRFGKFLENMVDWNISRNRYWGTPLNVWECESCDHQFAPKSIDDLRKHSTKETQEDLELHKPYVDEVQVCCEKCGGTMTRTPEVIDVWFDSGSMPFAQYHYPFENKELFEEQFPADVIAEGIDQTRGWFYSLLAVSALYTGKVPYKRVLSLGHVLDEEGQKMSKSKGNALDPVDLVNQFGADALRWALLVDSAPWNAKRFSERTVLEAKSKFVDTLVNVYSFYVLYANLDEYNPNETYDVKRTKLDEWVLSRLHSTTKKVRIALDDYQFTNAAREIAALVDEVSNWYVRRSRNRFWESGMNAEKAAAYETLHDVLVTISKLIAPFTPFVAEDIHLNLTGSSVHLEDYPVVNESLLQPKLEAEMNAVLQVVELGRSNRNQHSLKVKQPLAELVLLEHNENDMDWESYRDIVMDELNVKAFHVELDETKYTSYQLKLNFKTAGPKFGKNVNAVNGWLKQLSQDEVQNFVSTERAVYEVASGEEIVVTTEDVLVEKVAKSGFSNTTNGQYTVMLDTNVTEELLQEGVAREFIRAVQEYRKQLNLPVNLRVDVILDTEEELQQTLTNHKELLEENLLVKQFTFGHLTNEDDELSLGETKVRIKLSATK</sequence>
<feature type="chain" id="PRO_0000098518" description="Isoleucine--tRNA ligase 2">
    <location>
        <begin position="1"/>
        <end position="1033"/>
    </location>
</feature>
<feature type="short sequence motif" description="'HIGH' region">
    <location>
        <begin position="47"/>
        <end position="57"/>
    </location>
</feature>
<feature type="short sequence motif" description="'KMSKS' region">
    <location>
        <begin position="590"/>
        <end position="594"/>
    </location>
</feature>
<feature type="binding site" evidence="1">
    <location>
        <position position="593"/>
    </location>
    <ligand>
        <name>ATP</name>
        <dbReference type="ChEBI" id="CHEBI:30616"/>
    </ligand>
</feature>
<proteinExistence type="inferred from homology"/>
<accession>Q63BZ8</accession>
<reference key="1">
    <citation type="journal article" date="2006" name="J. Bacteriol.">
        <title>Pathogenomic sequence analysis of Bacillus cereus and Bacillus thuringiensis isolates closely related to Bacillus anthracis.</title>
        <authorList>
            <person name="Han C.S."/>
            <person name="Xie G."/>
            <person name="Challacombe J.F."/>
            <person name="Altherr M.R."/>
            <person name="Bhotika S.S."/>
            <person name="Bruce D."/>
            <person name="Campbell C.S."/>
            <person name="Campbell M.L."/>
            <person name="Chen J."/>
            <person name="Chertkov O."/>
            <person name="Cleland C."/>
            <person name="Dimitrijevic M."/>
            <person name="Doggett N.A."/>
            <person name="Fawcett J.J."/>
            <person name="Glavina T."/>
            <person name="Goodwin L.A."/>
            <person name="Hill K.K."/>
            <person name="Hitchcock P."/>
            <person name="Jackson P.J."/>
            <person name="Keim P."/>
            <person name="Kewalramani A.R."/>
            <person name="Longmire J."/>
            <person name="Lucas S."/>
            <person name="Malfatti S."/>
            <person name="McMurry K."/>
            <person name="Meincke L.J."/>
            <person name="Misra M."/>
            <person name="Moseman B.L."/>
            <person name="Mundt M."/>
            <person name="Munk A.C."/>
            <person name="Okinaka R.T."/>
            <person name="Parson-Quintana B."/>
            <person name="Reilly L.P."/>
            <person name="Richardson P."/>
            <person name="Robinson D.L."/>
            <person name="Rubin E."/>
            <person name="Saunders E."/>
            <person name="Tapia R."/>
            <person name="Tesmer J.G."/>
            <person name="Thayer N."/>
            <person name="Thompson L.S."/>
            <person name="Tice H."/>
            <person name="Ticknor L.O."/>
            <person name="Wills P.L."/>
            <person name="Brettin T.S."/>
            <person name="Gilna P."/>
        </authorList>
    </citation>
    <scope>NUCLEOTIDE SEQUENCE [LARGE SCALE GENOMIC DNA]</scope>
    <source>
        <strain>ZK / E33L</strain>
    </source>
</reference>
<protein>
    <recommendedName>
        <fullName evidence="1">Isoleucine--tRNA ligase 2</fullName>
        <ecNumber evidence="1">6.1.1.5</ecNumber>
    </recommendedName>
    <alternativeName>
        <fullName evidence="1">Isoleucyl-tRNA synthetase 2</fullName>
        <shortName evidence="1">IleRS 2</shortName>
    </alternativeName>
</protein>
<organism>
    <name type="scientific">Bacillus cereus (strain ZK / E33L)</name>
    <dbReference type="NCBI Taxonomy" id="288681"/>
    <lineage>
        <taxon>Bacteria</taxon>
        <taxon>Bacillati</taxon>
        <taxon>Bacillota</taxon>
        <taxon>Bacilli</taxon>
        <taxon>Bacillales</taxon>
        <taxon>Bacillaceae</taxon>
        <taxon>Bacillus</taxon>
        <taxon>Bacillus cereus group</taxon>
    </lineage>
</organism>
<keyword id="KW-0030">Aminoacyl-tRNA synthetase</keyword>
<keyword id="KW-0067">ATP-binding</keyword>
<keyword id="KW-0963">Cytoplasm</keyword>
<keyword id="KW-0436">Ligase</keyword>
<keyword id="KW-0479">Metal-binding</keyword>
<keyword id="KW-0547">Nucleotide-binding</keyword>
<keyword id="KW-0648">Protein biosynthesis</keyword>
<keyword id="KW-0862">Zinc</keyword>
<comment type="function">
    <text evidence="1">Catalyzes the attachment of isoleucine to tRNA(Ile). As IleRS can inadvertently accommodate and process structurally similar amino acids such as valine, to avoid such errors it has two additional distinct tRNA(Ile)-dependent editing activities. One activity is designated as 'pretransfer' editing and involves the hydrolysis of activated Val-AMP. The other activity is designated 'posttransfer' editing and involves deacylation of mischarged Val-tRNA(Ile).</text>
</comment>
<comment type="catalytic activity">
    <reaction evidence="1">
        <text>tRNA(Ile) + L-isoleucine + ATP = L-isoleucyl-tRNA(Ile) + AMP + diphosphate</text>
        <dbReference type="Rhea" id="RHEA:11060"/>
        <dbReference type="Rhea" id="RHEA-COMP:9666"/>
        <dbReference type="Rhea" id="RHEA-COMP:9695"/>
        <dbReference type="ChEBI" id="CHEBI:30616"/>
        <dbReference type="ChEBI" id="CHEBI:33019"/>
        <dbReference type="ChEBI" id="CHEBI:58045"/>
        <dbReference type="ChEBI" id="CHEBI:78442"/>
        <dbReference type="ChEBI" id="CHEBI:78528"/>
        <dbReference type="ChEBI" id="CHEBI:456215"/>
        <dbReference type="EC" id="6.1.1.5"/>
    </reaction>
</comment>
<comment type="cofactor">
    <cofactor evidence="1">
        <name>Zn(2+)</name>
        <dbReference type="ChEBI" id="CHEBI:29105"/>
    </cofactor>
</comment>
<comment type="subunit">
    <text evidence="1">Monomer.</text>
</comment>
<comment type="subcellular location">
    <subcellularLocation>
        <location evidence="1">Cytoplasm</location>
    </subcellularLocation>
</comment>
<comment type="domain">
    <text evidence="1">IleRS has two distinct active sites: one for aminoacylation and one for editing. The misactivated valine is translocated from the active site to the editing site, which sterically excludes the correctly activated isoleucine. The single editing site contains two valyl binding pockets, one specific for each substrate (Val-AMP or Val-tRNA(Ile)).</text>
</comment>
<comment type="similarity">
    <text evidence="1">Belongs to the class-I aminoacyl-tRNA synthetase family. IleS type 2 subfamily.</text>
</comment>